<reference key="1">
    <citation type="journal article" date="2006" name="Nature">
        <title>Insights from the genome of the biotrophic fungal plant pathogen Ustilago maydis.</title>
        <authorList>
            <person name="Kaemper J."/>
            <person name="Kahmann R."/>
            <person name="Boelker M."/>
            <person name="Ma L.-J."/>
            <person name="Brefort T."/>
            <person name="Saville B.J."/>
            <person name="Banuett F."/>
            <person name="Kronstad J.W."/>
            <person name="Gold S.E."/>
            <person name="Mueller O."/>
            <person name="Perlin M.H."/>
            <person name="Woesten H.A.B."/>
            <person name="de Vries R."/>
            <person name="Ruiz-Herrera J."/>
            <person name="Reynaga-Pena C.G."/>
            <person name="Snetselaar K."/>
            <person name="McCann M."/>
            <person name="Perez-Martin J."/>
            <person name="Feldbruegge M."/>
            <person name="Basse C.W."/>
            <person name="Steinberg G."/>
            <person name="Ibeas J.I."/>
            <person name="Holloman W."/>
            <person name="Guzman P."/>
            <person name="Farman M.L."/>
            <person name="Stajich J.E."/>
            <person name="Sentandreu R."/>
            <person name="Gonzalez-Prieto J.M."/>
            <person name="Kennell J.C."/>
            <person name="Molina L."/>
            <person name="Schirawski J."/>
            <person name="Mendoza-Mendoza A."/>
            <person name="Greilinger D."/>
            <person name="Muench K."/>
            <person name="Roessel N."/>
            <person name="Scherer M."/>
            <person name="Vranes M."/>
            <person name="Ladendorf O."/>
            <person name="Vincon V."/>
            <person name="Fuchs U."/>
            <person name="Sandrock B."/>
            <person name="Meng S."/>
            <person name="Ho E.C.H."/>
            <person name="Cahill M.J."/>
            <person name="Boyce K.J."/>
            <person name="Klose J."/>
            <person name="Klosterman S.J."/>
            <person name="Deelstra H.J."/>
            <person name="Ortiz-Castellanos L."/>
            <person name="Li W."/>
            <person name="Sanchez-Alonso P."/>
            <person name="Schreier P.H."/>
            <person name="Haeuser-Hahn I."/>
            <person name="Vaupel M."/>
            <person name="Koopmann E."/>
            <person name="Friedrich G."/>
            <person name="Voss H."/>
            <person name="Schlueter T."/>
            <person name="Margolis J."/>
            <person name="Platt D."/>
            <person name="Swimmer C."/>
            <person name="Gnirke A."/>
            <person name="Chen F."/>
            <person name="Vysotskaia V."/>
            <person name="Mannhaupt G."/>
            <person name="Gueldener U."/>
            <person name="Muensterkoetter M."/>
            <person name="Haase D."/>
            <person name="Oesterheld M."/>
            <person name="Mewes H.-W."/>
            <person name="Mauceli E.W."/>
            <person name="DeCaprio D."/>
            <person name="Wade C.M."/>
            <person name="Butler J."/>
            <person name="Young S.K."/>
            <person name="Jaffe D.B."/>
            <person name="Calvo S.E."/>
            <person name="Nusbaum C."/>
            <person name="Galagan J.E."/>
            <person name="Birren B.W."/>
        </authorList>
    </citation>
    <scope>NUCLEOTIDE SEQUENCE [LARGE SCALE GENOMIC DNA]</scope>
    <source>
        <strain>DSM 14603 / FGSC 9021 / UM521</strain>
    </source>
</reference>
<reference key="2">
    <citation type="submission" date="2014-09" db="EMBL/GenBank/DDBJ databases">
        <authorList>
            <person name="Gueldener U."/>
            <person name="Muensterkoetter M."/>
            <person name="Walter M.C."/>
            <person name="Mannhaupt G."/>
            <person name="Kahmann R."/>
        </authorList>
    </citation>
    <scope>GENOME REANNOTATION</scope>
    <source>
        <strain>DSM 14603 / FGSC 9021 / UM521</strain>
    </source>
</reference>
<reference key="3">
    <citation type="journal article" date="2002" name="J. Biosci. Bioeng.">
        <title>Functions and potential applications of glycolipid biosurfactants--from energy-saving materials to gene delivery carriers.</title>
        <authorList>
            <person name="Kitamoto D."/>
            <person name="Isoda H."/>
            <person name="Nakahara T."/>
        </authorList>
    </citation>
    <scope>BIOTECHNOLOGY</scope>
</reference>
<reference key="4">
    <citation type="journal article" date="2006" name="Appl. Environ. Microbiol.">
        <title>Identification of a gene cluster for biosynthesis of mannosylerythritol lipids in the basidiomycetous fungus Ustilago maydis.</title>
        <authorList>
            <person name="Hewald S."/>
            <person name="Linne U."/>
            <person name="Scherer M."/>
            <person name="Marahiel M.A."/>
            <person name="Kaemper J."/>
            <person name="Boelker M."/>
        </authorList>
    </citation>
    <scope>FUNCTION</scope>
    <scope>DISRUPTION PHENOTYPE</scope>
</reference>
<reference key="5">
    <citation type="journal article" date="2007" name="Colloids Surf. B Biointerfaces">
        <title>Kinetic studies on the interactions between glycolipid biosurfactant assembled monolayers and various classes of immunoglobulins using surface plasmon resonance.</title>
        <authorList>
            <person name="Ito S."/>
            <person name="Imura T."/>
            <person name="Fukuoka T."/>
            <person name="Morita T."/>
            <person name="Sakai H."/>
            <person name="Abe M."/>
            <person name="Kitamoto D."/>
        </authorList>
    </citation>
    <scope>BIOTECHNOLOGY</scope>
</reference>
<reference key="6">
    <citation type="journal article" date="2007" name="Langmuir">
        <title>Aqueous-phase behavior of natural glycolipid biosurfactant mannosylerythritol lipid A: sponge, cubic, and lamellar phases.</title>
        <authorList>
            <person name="Imura T."/>
            <person name="Hikosaka Y."/>
            <person name="Worakitkanchanakul W."/>
            <person name="Sakai H."/>
            <person name="Abe M."/>
            <person name="Konishi M."/>
            <person name="Minamikawa H."/>
            <person name="Kitamoto D."/>
        </authorList>
    </citation>
    <scope>BIOTECHNOLOGY</scope>
</reference>
<reference key="7">
    <citation type="journal article" date="2009" name="Biotechnol. Appl. Biochem.">
        <title>Production of glycolipid biosurfactants by basidiomycetous yeasts.</title>
        <authorList>
            <person name="Morita T."/>
            <person name="Fukuoka T."/>
            <person name="Imura T."/>
            <person name="Kitamoto D."/>
        </authorList>
    </citation>
    <scope>BIOTECHNOLOGY</scope>
</reference>
<reference key="8">
    <citation type="journal article" date="2009" name="Curr. Opin. Colloid Interface Sci.">
        <title>Self-assembling properties of glycolipid biosurfactants and their potential applications.</title>
        <authorList>
            <person name="Kitamoto D."/>
            <person name="Morita T."/>
            <person name="Fukuoka T."/>
            <person name="Konishi M."/>
            <person name="Imura T."/>
        </authorList>
    </citation>
    <scope>BIOTECHNOLOGY</scope>
</reference>
<reference key="9">
    <citation type="journal article" date="2014" name="Mol. Microbiol.">
        <title>Peroxisomes contribute to biosynthesis of extracellular glycolipids in fungi.</title>
        <authorList>
            <person name="Freitag J."/>
            <person name="Ast J."/>
            <person name="Linne U."/>
            <person name="Stehlik T."/>
            <person name="Martorana D."/>
            <person name="Boelker M."/>
            <person name="Sandrock B."/>
        </authorList>
    </citation>
    <scope>SUBCELLULAR LOCATION</scope>
    <scope>FUNCTION</scope>
</reference>
<protein>
    <recommendedName>
        <fullName evidence="11">MFS-type efflux pump MMF1</fullName>
    </recommendedName>
    <alternativeName>
        <fullName evidence="11">Mannosylerythritol lipids (MELs) biosynthesis cluster protein MMF1</fullName>
    </alternativeName>
</protein>
<organism>
    <name type="scientific">Mycosarcoma maydis</name>
    <name type="common">Corn smut fungus</name>
    <name type="synonym">Ustilago maydis</name>
    <dbReference type="NCBI Taxonomy" id="5270"/>
    <lineage>
        <taxon>Eukaryota</taxon>
        <taxon>Fungi</taxon>
        <taxon>Dikarya</taxon>
        <taxon>Basidiomycota</taxon>
        <taxon>Ustilaginomycotina</taxon>
        <taxon>Ustilaginomycetes</taxon>
        <taxon>Ustilaginales</taxon>
        <taxon>Ustilaginaceae</taxon>
        <taxon>Mycosarcoma</taxon>
    </lineage>
</organism>
<accession>A0A0D1DYJ6</accession>
<keyword id="KW-1003">Cell membrane</keyword>
<keyword id="KW-0325">Glycoprotein</keyword>
<keyword id="KW-0472">Membrane</keyword>
<keyword id="KW-1185">Reference proteome</keyword>
<keyword id="KW-0812">Transmembrane</keyword>
<keyword id="KW-1133">Transmembrane helix</keyword>
<keyword id="KW-0813">Transport</keyword>
<keyword id="KW-0926">Vacuole</keyword>
<dbReference type="EMBL" id="CM003146">
    <property type="protein sequence ID" value="KIS69144.1"/>
    <property type="molecule type" value="Genomic_DNA"/>
</dbReference>
<dbReference type="RefSeq" id="XP_011389466.1">
    <property type="nucleotide sequence ID" value="XM_011391164.1"/>
</dbReference>
<dbReference type="SMR" id="A0A0D1DYJ6"/>
<dbReference type="STRING" id="237631.A0A0D1DYJ6"/>
<dbReference type="GlyCosmos" id="A0A0D1DYJ6">
    <property type="glycosylation" value="3 sites, No reported glycans"/>
</dbReference>
<dbReference type="EnsemblFungi" id="KIS69144">
    <property type="protein sequence ID" value="KIS69144"/>
    <property type="gene ID" value="UMAG_03115"/>
</dbReference>
<dbReference type="GeneID" id="23563676"/>
<dbReference type="KEGG" id="uma:UMAG_03115"/>
<dbReference type="VEuPathDB" id="FungiDB:UMAG_03115"/>
<dbReference type="eggNOG" id="KOG0254">
    <property type="taxonomic scope" value="Eukaryota"/>
</dbReference>
<dbReference type="InParanoid" id="A0A0D1DYJ6"/>
<dbReference type="OMA" id="ALCMTTF"/>
<dbReference type="OrthoDB" id="3437016at2759"/>
<dbReference type="Proteomes" id="UP000000561">
    <property type="component" value="Chromosome 7"/>
</dbReference>
<dbReference type="GO" id="GO:0005886">
    <property type="term" value="C:plasma membrane"/>
    <property type="evidence" value="ECO:0000318"/>
    <property type="project" value="GO_Central"/>
</dbReference>
<dbReference type="GO" id="GO:0005774">
    <property type="term" value="C:vacuolar membrane"/>
    <property type="evidence" value="ECO:0007669"/>
    <property type="project" value="UniProtKB-SubCell"/>
</dbReference>
<dbReference type="GO" id="GO:0022857">
    <property type="term" value="F:transmembrane transporter activity"/>
    <property type="evidence" value="ECO:0000318"/>
    <property type="project" value="GO_Central"/>
</dbReference>
<dbReference type="GO" id="GO:0055085">
    <property type="term" value="P:transmembrane transport"/>
    <property type="evidence" value="ECO:0000318"/>
    <property type="project" value="GO_Central"/>
</dbReference>
<dbReference type="FunFam" id="1.20.1250.20:FF:000484">
    <property type="entry name" value="MFS general substrate transporter"/>
    <property type="match status" value="1"/>
</dbReference>
<dbReference type="Gene3D" id="1.20.1250.20">
    <property type="entry name" value="MFS general substrate transporter like domains"/>
    <property type="match status" value="1"/>
</dbReference>
<dbReference type="Gene3D" id="1.20.1720.10">
    <property type="entry name" value="Multidrug resistance protein D"/>
    <property type="match status" value="1"/>
</dbReference>
<dbReference type="InterPro" id="IPR011701">
    <property type="entry name" value="MFS"/>
</dbReference>
<dbReference type="InterPro" id="IPR020846">
    <property type="entry name" value="MFS_dom"/>
</dbReference>
<dbReference type="InterPro" id="IPR036259">
    <property type="entry name" value="MFS_trans_sf"/>
</dbReference>
<dbReference type="PANTHER" id="PTHR23501:SF102">
    <property type="entry name" value="DRUG TRANSPORTER, PUTATIVE (AFU_ORTHOLOGUE AFUA_3G08530)-RELATED"/>
    <property type="match status" value="1"/>
</dbReference>
<dbReference type="PANTHER" id="PTHR23501">
    <property type="entry name" value="MAJOR FACILITATOR SUPERFAMILY"/>
    <property type="match status" value="1"/>
</dbReference>
<dbReference type="Pfam" id="PF07690">
    <property type="entry name" value="MFS_1"/>
    <property type="match status" value="1"/>
</dbReference>
<dbReference type="SUPFAM" id="SSF103473">
    <property type="entry name" value="MFS general substrate transporter"/>
    <property type="match status" value="1"/>
</dbReference>
<dbReference type="PROSITE" id="PS50850">
    <property type="entry name" value="MFS"/>
    <property type="match status" value="1"/>
</dbReference>
<name>MMF1_MYCMD</name>
<feature type="chain" id="PRO_0000449541" description="MFS-type efflux pump MMF1">
    <location>
        <begin position="1"/>
        <end position="619"/>
    </location>
</feature>
<feature type="transmembrane region" description="Helical" evidence="1">
    <location>
        <begin position="87"/>
        <end position="107"/>
    </location>
</feature>
<feature type="transmembrane region" description="Helical" evidence="1">
    <location>
        <begin position="131"/>
        <end position="151"/>
    </location>
</feature>
<feature type="transmembrane region" description="Helical" evidence="1">
    <location>
        <begin position="161"/>
        <end position="181"/>
    </location>
</feature>
<feature type="transmembrane region" description="Helical" evidence="1">
    <location>
        <begin position="184"/>
        <end position="204"/>
    </location>
</feature>
<feature type="transmembrane region" description="Helical" evidence="1">
    <location>
        <begin position="211"/>
        <end position="231"/>
    </location>
</feature>
<feature type="transmembrane region" description="Helical" evidence="1">
    <location>
        <begin position="242"/>
        <end position="262"/>
    </location>
</feature>
<feature type="transmembrane region" description="Helical" evidence="1">
    <location>
        <begin position="278"/>
        <end position="298"/>
    </location>
</feature>
<feature type="transmembrane region" description="Helical" evidence="1">
    <location>
        <begin position="311"/>
        <end position="331"/>
    </location>
</feature>
<feature type="transmembrane region" description="Helical" evidence="1">
    <location>
        <begin position="359"/>
        <end position="379"/>
    </location>
</feature>
<feature type="transmembrane region" description="Helical" evidence="1">
    <location>
        <begin position="389"/>
        <end position="409"/>
    </location>
</feature>
<feature type="transmembrane region" description="Helical" evidence="1">
    <location>
        <begin position="418"/>
        <end position="438"/>
    </location>
</feature>
<feature type="transmembrane region" description="Helical" evidence="1">
    <location>
        <begin position="450"/>
        <end position="470"/>
    </location>
</feature>
<feature type="transmembrane region" description="Helical" evidence="1">
    <location>
        <begin position="482"/>
        <end position="502"/>
    </location>
</feature>
<feature type="transmembrane region" description="Helical" evidence="1">
    <location>
        <begin position="552"/>
        <end position="572"/>
    </location>
</feature>
<feature type="region of interest" description="Disordered" evidence="3">
    <location>
        <begin position="1"/>
        <end position="74"/>
    </location>
</feature>
<feature type="compositionally biased region" description="Low complexity" evidence="3">
    <location>
        <begin position="21"/>
        <end position="42"/>
    </location>
</feature>
<feature type="compositionally biased region" description="Basic and acidic residues" evidence="3">
    <location>
        <begin position="45"/>
        <end position="61"/>
    </location>
</feature>
<feature type="glycosylation site" description="N-linked (GlcNAc...) asparagine" evidence="2">
    <location>
        <position position="32"/>
    </location>
</feature>
<feature type="glycosylation site" description="N-linked (GlcNAc...) asparagine" evidence="2">
    <location>
        <position position="74"/>
    </location>
</feature>
<feature type="glycosylation site" description="N-linked (GlcNAc...) asparagine" evidence="2">
    <location>
        <position position="348"/>
    </location>
</feature>
<comment type="function">
    <text evidence="5 9">MFS-type efflux pump; part of the gene cluster that mediates the biosynthesis of mannosylerythritol lipids (MELs), surface-active substances that enhance the availability of water-insoluble substrates (PubMed:16885300, PubMed:24835306). Mannosylerythritol lipid production is responsible for hemolytic activity of Ustilago maydis (PubMed:16885300). MMF1 is directly involved in the secretion of MELs (PubMed:16885300, PubMed:24835306).</text>
</comment>
<comment type="subcellular location">
    <subcellularLocation>
        <location evidence="9">Cell membrane</location>
        <topology evidence="1">Multi-pass membrane protein</topology>
    </subcellularLocation>
    <subcellularLocation>
        <location evidence="9">Vacuole membrane</location>
        <topology evidence="1">Multi-pass membrane protein</topology>
    </subcellularLocation>
</comment>
<comment type="disruption phenotype">
    <text evidence="5">Impairs the secretion of mannosylerythritol lipids (MELs).</text>
</comment>
<comment type="biotechnology">
    <text evidence="4 6 7 8 10">MELs not only have high potential as eco-friendly biosurfactants due to their excellent surface activity, but also have attracted considerable recent interest because of thei runique properties, including self-assembly, anti-tumor and cell differentiation induction activities, and moisturizing and hair-repairing properties.</text>
</comment>
<comment type="similarity">
    <text evidence="12">Belongs to the major facilitator superfamily.</text>
</comment>
<sequence>MADEKRTSIEEPGTPMSYSTAASPELLSSSNNASALPAYPSSQTKQDKESLSHDQAVRVEPESSTPLTDSVEDNESGAKVKKDLHFWIIFSALMLIAFVAALDMTMISTALPAITANLPPSTIAANWITSAFLLPMVASQPIFGGLSCSIGRKWSINSALVIFLVGSVVCATAKTFLVLVIGRGIQGLGGGGIHSMCEIIMSDLTTLRERGLFFGVIALVFAVAGFAAPVLGGVFSEHSWPWIFWINLPIGAISLVLLIIFLNIRVPLLTGKEKWQKLDLVGNAVLFGSVTAILIAVTEGGIKYRWSAWQIWVPLVVGLLGIMLFLVIEWVPNRIAPKPVFPLDLFRNRTASVAYVQTFVHGVIFYGVIYMVPIYFQAIKDRTPLQSAIWSFPLSAPSFPFAMGAGVLISITGKYKLLIFCGWMLMAAGIGWMTHWHVGTSKFEWAFSQVILGAGLGIMFPITLPPIQAALPASRLESATAAYAFTRTFGAVWGITAATTIFSTQAAKNLRPYYDQLNPLGLSDFTVVAFSEQLRNLPQPIQGVVKGVYADAISDSYWLFVPLAIIGFFTTFGMKELPLPDFIKSEAKLEQKQDVTPALKSSAAHAVVNVKTEVPSTLP</sequence>
<gene>
    <name evidence="11" type="primary">MMF1</name>
    <name type="ORF">UMAG_03115</name>
</gene>
<proteinExistence type="evidence at protein level"/>
<evidence type="ECO:0000255" key="1"/>
<evidence type="ECO:0000255" key="2">
    <source>
        <dbReference type="PROSITE-ProRule" id="PRU00498"/>
    </source>
</evidence>
<evidence type="ECO:0000256" key="3">
    <source>
        <dbReference type="SAM" id="MobiDB-lite"/>
    </source>
</evidence>
<evidence type="ECO:0000269" key="4">
    <source>
    </source>
</evidence>
<evidence type="ECO:0000269" key="5">
    <source>
    </source>
</evidence>
<evidence type="ECO:0000269" key="6">
    <source>
    </source>
</evidence>
<evidence type="ECO:0000269" key="7">
    <source>
    </source>
</evidence>
<evidence type="ECO:0000269" key="8">
    <source>
    </source>
</evidence>
<evidence type="ECO:0000269" key="9">
    <source>
    </source>
</evidence>
<evidence type="ECO:0000269" key="10">
    <source ref="8"/>
</evidence>
<evidence type="ECO:0000303" key="11">
    <source>
    </source>
</evidence>
<evidence type="ECO:0000305" key="12"/>